<name>HN_MUMPM</name>
<keyword id="KW-1015">Disulfide bond</keyword>
<keyword id="KW-0325">Glycoprotein</keyword>
<keyword id="KW-0348">Hemagglutinin</keyword>
<keyword id="KW-1032">Host cell membrane</keyword>
<keyword id="KW-1043">Host membrane</keyword>
<keyword id="KW-0945">Host-virus interaction</keyword>
<keyword id="KW-0378">Hydrolase</keyword>
<keyword id="KW-0472">Membrane</keyword>
<keyword id="KW-1185">Reference proteome</keyword>
<keyword id="KW-0735">Signal-anchor</keyword>
<keyword id="KW-0812">Transmembrane</keyword>
<keyword id="KW-1133">Transmembrane helix</keyword>
<keyword id="KW-1161">Viral attachment to host cell</keyword>
<keyword id="KW-0261">Viral envelope protein</keyword>
<keyword id="KW-0946">Virion</keyword>
<keyword id="KW-1160">Virus entry into host cell</keyword>
<organism>
    <name type="scientific">Mumps virus genotype B (strain Miyahara vaccine)</name>
    <name type="common">MuV</name>
    <dbReference type="NCBI Taxonomy" id="11171"/>
    <lineage>
        <taxon>Viruses</taxon>
        <taxon>Riboviria</taxon>
        <taxon>Orthornavirae</taxon>
        <taxon>Negarnaviricota</taxon>
        <taxon>Haploviricotina</taxon>
        <taxon>Monjiviricetes</taxon>
        <taxon>Mononegavirales</taxon>
        <taxon>Paramyxoviridae</taxon>
        <taxon>Rubulavirinae</taxon>
        <taxon>Orthorubulavirus</taxon>
        <taxon>Orthorubulavirus parotitidis</taxon>
        <taxon>Mumps orthorubulavirus</taxon>
    </lineage>
</organism>
<comment type="function">
    <text evidence="2 3 6">Attaches the virus to alpha-2,3-linked sialic acid-containing cell receptors and thereby initiating infection (By similarity). Binding of HN protein to the receptor induces a conformational change that allows the F protein to trigger virion/cell membranes fusion (By similarity). Binds to the glycan motifs sialyl Lewis (SLe) and GM2 ganglioside (GM2-glycan) (By similarity).</text>
</comment>
<comment type="function">
    <text evidence="5">Neuraminidase (sialidase) activity ensures the efficient spread of the virus by dissociating the mature virions from the neuraminic acid containing glycoproteins.</text>
</comment>
<comment type="catalytic activity">
    <reaction evidence="6">
        <text>Hydrolysis of alpha-(2-&gt;3)-, alpha-(2-&gt;6)-, alpha-(2-&gt;8)- glycosidic linkages of terminal sialic acid residues in oligosaccharides, glycoproteins, glycolipids, colominic acid and synthetic substrates.</text>
        <dbReference type="EC" id="3.2.1.18"/>
    </reaction>
</comment>
<comment type="subunit">
    <text evidence="1 6">Homotetramer; composed of disulfide-linked homodimers (By similarity). Interacts with F protein trimer (By similarity).</text>
</comment>
<comment type="subcellular location">
    <subcellularLocation>
        <location evidence="4">Virion membrane</location>
        <topology evidence="8">Single-pass type II membrane protein</topology>
    </subcellularLocation>
    <subcellularLocation>
        <location evidence="8">Host cell membrane</location>
        <topology evidence="8">Single-pass type II membrane protein</topology>
    </subcellularLocation>
</comment>
<comment type="domain">
    <text evidence="6">The C-terminus (head domain) is involved in binding the cellular receptor.</text>
</comment>
<comment type="similarity">
    <text evidence="8">Belongs to the paramyxoviruses hemagglutinin-neuraminidase family.</text>
</comment>
<feature type="chain" id="PRO_0000142603" description="Hemagglutinin-neuraminidase">
    <location>
        <begin position="1"/>
        <end position="582"/>
    </location>
</feature>
<feature type="topological domain" description="Intravirion" evidence="7">
    <location>
        <begin position="1"/>
        <end position="34"/>
    </location>
</feature>
<feature type="transmembrane region" description="Helical; Signal-anchor for type II membrane protein" evidence="7">
    <location>
        <begin position="35"/>
        <end position="55"/>
    </location>
</feature>
<feature type="topological domain" description="Virion surface" evidence="7">
    <location>
        <begin position="56"/>
        <end position="582"/>
    </location>
</feature>
<feature type="region of interest" description="Involved in neuraminidase activity" evidence="5">
    <location>
        <begin position="240"/>
        <end position="245"/>
    </location>
</feature>
<feature type="site" description="Binding to the glycan motifs of the host receptor" evidence="6">
    <location>
        <position position="180"/>
    </location>
</feature>
<feature type="site" description="Binding to the glycan motifs of the host receptor" evidence="6">
    <location>
        <position position="242"/>
    </location>
</feature>
<feature type="site" description="Binding to the glycan motifs of the host receptor" evidence="6">
    <location>
        <position position="264"/>
    </location>
</feature>
<feature type="site" description="Binding to the glycan motifs of the host receptor" evidence="6">
    <location>
        <position position="323"/>
    </location>
</feature>
<feature type="site" description="Binding to the glycan motifs of the host receptor" evidence="6">
    <location>
        <position position="369"/>
    </location>
</feature>
<feature type="site" description="Binding to the glycan motifs of the host receptor" evidence="6">
    <location>
        <position position="407"/>
    </location>
</feature>
<feature type="site" description="Binding to the glycan motifs of the host receptor" evidence="6">
    <location>
        <position position="422"/>
    </location>
</feature>
<feature type="site" description="Binding to the glycan motifs of the host receptor" evidence="6">
    <location>
        <position position="512"/>
    </location>
</feature>
<feature type="site" description="Binding to the glycan motifs of the host receptor" evidence="6">
    <location>
        <position position="540"/>
    </location>
</feature>
<feature type="glycosylation site" description="N-linked (GlcNAc...) asparagine; by host" evidence="6">
    <location>
        <position position="127"/>
    </location>
</feature>
<feature type="glycosylation site" description="N-linked (GlcNAc...) asparagine; by host" evidence="6">
    <location>
        <position position="284"/>
    </location>
</feature>
<feature type="glycosylation site" description="N-linked (GlcNAc...) asparagine; by host" evidence="6">
    <location>
        <position position="329"/>
    </location>
</feature>
<feature type="glycosylation site" description="N-linked (GlcNAc...) asparagine; by host" evidence="6">
    <location>
        <position position="400"/>
    </location>
</feature>
<feature type="glycosylation site" description="N-linked (GlcNAc...) asparagine; by host" evidence="6">
    <location>
        <position position="448"/>
    </location>
</feature>
<feature type="glycosylation site" description="N-linked (GlcNAc...) asparagine; by host" evidence="6">
    <location>
        <position position="464"/>
    </location>
</feature>
<feature type="glycosylation site" description="N-linked (GlcNAc...) asparagine; by host" evidence="6">
    <location>
        <position position="507"/>
    </location>
</feature>
<feature type="disulfide bond" evidence="6">
    <location>
        <begin position="178"/>
        <end position="202"/>
    </location>
</feature>
<feature type="disulfide bond" evidence="6">
    <location>
        <begin position="192"/>
        <end position="253"/>
    </location>
</feature>
<feature type="disulfide bond" evidence="6">
    <location>
        <begin position="244"/>
        <end position="257"/>
    </location>
</feature>
<feature type="disulfide bond" evidence="6">
    <location>
        <begin position="350"/>
        <end position="471"/>
    </location>
</feature>
<feature type="disulfide bond" evidence="6">
    <location>
        <begin position="382"/>
        <end position="392"/>
    </location>
</feature>
<feature type="disulfide bond" evidence="6">
    <location>
        <begin position="465"/>
        <end position="475"/>
    </location>
</feature>
<feature type="disulfide bond" evidence="6">
    <location>
        <begin position="545"/>
        <end position="556"/>
    </location>
</feature>
<evidence type="ECO:0000250" key="1">
    <source>
        <dbReference type="UniProtKB" id="P04853"/>
    </source>
</evidence>
<evidence type="ECO:0000250" key="2">
    <source>
        <dbReference type="UniProtKB" id="P19762"/>
    </source>
</evidence>
<evidence type="ECO:0000250" key="3">
    <source>
        <dbReference type="UniProtKB" id="Q786F2"/>
    </source>
</evidence>
<evidence type="ECO:0000250" key="4">
    <source>
        <dbReference type="UniProtKB" id="Q8QV65"/>
    </source>
</evidence>
<evidence type="ECO:0000250" key="5">
    <source>
        <dbReference type="UniProtKB" id="Q91UL0"/>
    </source>
</evidence>
<evidence type="ECO:0000250" key="6">
    <source>
        <dbReference type="UniProtKB" id="Q9WAF5"/>
    </source>
</evidence>
<evidence type="ECO:0000255" key="7"/>
<evidence type="ECO:0000305" key="8"/>
<sequence length="582" mass="64044">MEPSKLFTMSDNATFAPGPVINAADKKTFRTCFRILVLSVQAVTLILVIVTLGELVRMINDQGLSNQLSSIADKIRESATMIASAVGVMNQVIHGVTVSLPLQIEGNQNQLLSTLATICTGKKQVSNCSTNIPLVNDLRFINGINKFIIEDYATHDFSIGHPLNMPSFIPTATSPNGCTRIPSFSLGKTHWCYTHNVINANCKDHTSSNQYISMGILVQTASGYPMFKTLKIQYLSDGLNRKSCSIATVPDGCAMYCYVSTQLETDDYAGSSPPTQKLTLLFYNDTVTERTISPTGLEGNWATLVPGVGSGIYFENKLIFPAYGGVLPNSSLGVKSAREFFRPVNPYNPCSGPQQDLDQRALRSYFPSYFSNRRVQSAFLVCAWNQILVTNCELVVPSNNQTLMGAEGRVLLINNRLLYYQRSTSWWPYELLYEISFTFTNSGQSSVNMSWIPIYSFTRPGSGNCSGENVCPTACVSGVYLDPWPLTPYSHQSGINRNFYFTGALLNSSTTRVNPTLYVSALNNLKVLAPYGNQGLFASYTTTTCFQDTGDASVYCVYIMELASNIVGEFQILPVLTRLTIT</sequence>
<organismHost>
    <name type="scientific">Homo sapiens</name>
    <name type="common">Human</name>
    <dbReference type="NCBI Taxonomy" id="9606"/>
</organismHost>
<accession>P11235</accession>
<accession>Q783V7</accession>
<proteinExistence type="evidence at transcript level"/>
<reference key="1">
    <citation type="journal article" date="1989" name="Nucleic Acids Res.">
        <title>Cloning and sequencing of the haemagglutinin-neuraminidase gene of mumps virus (Miyahara strain).</title>
        <authorList>
            <person name="Takeuchi K."/>
            <person name="Tanabayashi K."/>
            <person name="Hishiyama M."/>
            <person name="Yamada A."/>
            <person name="Sugiura A."/>
        </authorList>
    </citation>
    <scope>NUCLEOTIDE SEQUENCE [MRNA]</scope>
</reference>
<reference key="2">
    <citation type="journal article" date="1992" name="Virology">
        <title>Molecular cloning and sequence analysis of the mumps virus gene encoding the L protein and the trailer sequence.</title>
        <authorList>
            <person name="Okazaki K."/>
            <person name="Tanabayashi K."/>
            <person name="Takeuchi K."/>
            <person name="Hishiyama M."/>
            <person name="Okazaki K."/>
            <person name="Yamada A."/>
        </authorList>
    </citation>
    <scope>NUCLEOTIDE SEQUENCE [GENOMIC RNA]</scope>
</reference>
<reference key="3">
    <citation type="journal article" date="2022" name="Viruses">
        <title>Exploring the Mumps Virus Glycoproteins: A Review.</title>
        <authorList>
            <person name="Frost J.R."/>
            <person name="Shaikh S."/>
            <person name="Severini A."/>
        </authorList>
    </citation>
    <scope>REVIEW</scope>
</reference>
<protein>
    <recommendedName>
        <fullName>Hemagglutinin-neuraminidase</fullName>
        <ecNumber evidence="6">3.2.1.18</ecNumber>
    </recommendedName>
</protein>
<gene>
    <name type="primary">HN</name>
</gene>
<dbReference type="EC" id="3.2.1.18" evidence="6"/>
<dbReference type="EMBL" id="X15284">
    <property type="protein sequence ID" value="CAA33358.1"/>
    <property type="molecule type" value="mRNA"/>
</dbReference>
<dbReference type="EMBL" id="AB040874">
    <property type="protein sequence ID" value="BAA94390.1"/>
    <property type="molecule type" value="Genomic_RNA"/>
</dbReference>
<dbReference type="PIR" id="A34054">
    <property type="entry name" value="HNNZMM"/>
</dbReference>
<dbReference type="SMR" id="P11235"/>
<dbReference type="CAZy" id="GH83">
    <property type="family name" value="Glycoside Hydrolase Family 83"/>
</dbReference>
<dbReference type="GlyCosmos" id="P11235">
    <property type="glycosylation" value="7 sites, No reported glycans"/>
</dbReference>
<dbReference type="KEGG" id="vg:1489765"/>
<dbReference type="Proteomes" id="UP000002331">
    <property type="component" value="Segment"/>
</dbReference>
<dbReference type="GO" id="GO:0020002">
    <property type="term" value="C:host cell plasma membrane"/>
    <property type="evidence" value="ECO:0007669"/>
    <property type="project" value="UniProtKB-SubCell"/>
</dbReference>
<dbReference type="GO" id="GO:0016020">
    <property type="term" value="C:membrane"/>
    <property type="evidence" value="ECO:0007669"/>
    <property type="project" value="UniProtKB-KW"/>
</dbReference>
<dbReference type="GO" id="GO:0019031">
    <property type="term" value="C:viral envelope"/>
    <property type="evidence" value="ECO:0007669"/>
    <property type="project" value="UniProtKB-KW"/>
</dbReference>
<dbReference type="GO" id="GO:0055036">
    <property type="term" value="C:virion membrane"/>
    <property type="evidence" value="ECO:0007669"/>
    <property type="project" value="UniProtKB-SubCell"/>
</dbReference>
<dbReference type="GO" id="GO:0004308">
    <property type="term" value="F:exo-alpha-sialidase activity"/>
    <property type="evidence" value="ECO:0007669"/>
    <property type="project" value="UniProtKB-EC"/>
</dbReference>
<dbReference type="GO" id="GO:0046789">
    <property type="term" value="F:host cell surface receptor binding"/>
    <property type="evidence" value="ECO:0007669"/>
    <property type="project" value="InterPro"/>
</dbReference>
<dbReference type="GO" id="GO:0046718">
    <property type="term" value="P:symbiont entry into host cell"/>
    <property type="evidence" value="ECO:0007669"/>
    <property type="project" value="UniProtKB-KW"/>
</dbReference>
<dbReference type="GO" id="GO:0019062">
    <property type="term" value="P:virion attachment to host cell"/>
    <property type="evidence" value="ECO:0007669"/>
    <property type="project" value="UniProtKB-KW"/>
</dbReference>
<dbReference type="CDD" id="cd15469">
    <property type="entry name" value="HN"/>
    <property type="match status" value="1"/>
</dbReference>
<dbReference type="FunFam" id="2.120.10.10:FF:000004">
    <property type="entry name" value="Hemagglutinin-neuraminidase"/>
    <property type="match status" value="1"/>
</dbReference>
<dbReference type="Gene3D" id="1.20.5.110">
    <property type="match status" value="1"/>
</dbReference>
<dbReference type="Gene3D" id="2.120.10.10">
    <property type="match status" value="1"/>
</dbReference>
<dbReference type="InterPro" id="IPR016285">
    <property type="entry name" value="Hemagglutn-neuramid"/>
</dbReference>
<dbReference type="InterPro" id="IPR000665">
    <property type="entry name" value="Hemagglutn/HN"/>
</dbReference>
<dbReference type="InterPro" id="IPR036278">
    <property type="entry name" value="Sialidase_sf"/>
</dbReference>
<dbReference type="Pfam" id="PF00423">
    <property type="entry name" value="HN"/>
    <property type="match status" value="1"/>
</dbReference>
<dbReference type="PIRSF" id="PIRSF001072">
    <property type="entry name" value="Hemagglut-neuramid_paramyxoV"/>
    <property type="match status" value="1"/>
</dbReference>
<dbReference type="SUPFAM" id="SSF50939">
    <property type="entry name" value="Sialidases"/>
    <property type="match status" value="1"/>
</dbReference>